<comment type="function">
    <text evidence="1">Small subunit of the glutamine-dependent carbamoyl phosphate synthetase (CPSase). CPSase catalyzes the formation of carbamoyl phosphate from the ammonia moiety of glutamine, carbonate, and phosphate donated by ATP, constituting the first step of 2 biosynthetic pathways, one leading to arginine and/or urea and the other to pyrimidine nucleotides. The small subunit (glutamine amidotransferase) binds and cleaves glutamine to supply the large subunit with the substrate ammonia.</text>
</comment>
<comment type="catalytic activity">
    <reaction evidence="1">
        <text>hydrogencarbonate + L-glutamine + 2 ATP + H2O = carbamoyl phosphate + L-glutamate + 2 ADP + phosphate + 2 H(+)</text>
        <dbReference type="Rhea" id="RHEA:18633"/>
        <dbReference type="ChEBI" id="CHEBI:15377"/>
        <dbReference type="ChEBI" id="CHEBI:15378"/>
        <dbReference type="ChEBI" id="CHEBI:17544"/>
        <dbReference type="ChEBI" id="CHEBI:29985"/>
        <dbReference type="ChEBI" id="CHEBI:30616"/>
        <dbReference type="ChEBI" id="CHEBI:43474"/>
        <dbReference type="ChEBI" id="CHEBI:58228"/>
        <dbReference type="ChEBI" id="CHEBI:58359"/>
        <dbReference type="ChEBI" id="CHEBI:456216"/>
        <dbReference type="EC" id="6.3.5.5"/>
    </reaction>
</comment>
<comment type="catalytic activity">
    <molecule>Carbamoyl phosphate synthase small chain</molecule>
    <reaction evidence="1">
        <text>L-glutamine + H2O = L-glutamate + NH4(+)</text>
        <dbReference type="Rhea" id="RHEA:15889"/>
        <dbReference type="ChEBI" id="CHEBI:15377"/>
        <dbReference type="ChEBI" id="CHEBI:28938"/>
        <dbReference type="ChEBI" id="CHEBI:29985"/>
        <dbReference type="ChEBI" id="CHEBI:58359"/>
    </reaction>
</comment>
<comment type="pathway">
    <text evidence="1">Amino-acid biosynthesis; L-arginine biosynthesis; carbamoyl phosphate from bicarbonate: step 1/1.</text>
</comment>
<comment type="pathway">
    <text evidence="1">Pyrimidine metabolism; UMP biosynthesis via de novo pathway; (S)-dihydroorotate from bicarbonate: step 1/3.</text>
</comment>
<comment type="subunit">
    <text evidence="1">Composed of two chains; the small (or glutamine) chain promotes the hydrolysis of glutamine to ammonia, which is used by the large (or ammonia) chain to synthesize carbamoyl phosphate. Tetramer of heterodimers (alpha,beta)4.</text>
</comment>
<comment type="similarity">
    <text evidence="1">Belongs to the CarA family.</text>
</comment>
<gene>
    <name evidence="1" type="primary">carA</name>
    <name type="ordered locus">DR_0684</name>
</gene>
<organism>
    <name type="scientific">Deinococcus radiodurans (strain ATCC 13939 / DSM 20539 / JCM 16871 / CCUG 27074 / LMG 4051 / NBRC 15346 / NCIMB 9279 / VKM B-1422 / R1)</name>
    <dbReference type="NCBI Taxonomy" id="243230"/>
    <lineage>
        <taxon>Bacteria</taxon>
        <taxon>Thermotogati</taxon>
        <taxon>Deinococcota</taxon>
        <taxon>Deinococci</taxon>
        <taxon>Deinococcales</taxon>
        <taxon>Deinococcaceae</taxon>
        <taxon>Deinococcus</taxon>
    </lineage>
</organism>
<proteinExistence type="inferred from homology"/>
<evidence type="ECO:0000255" key="1">
    <source>
        <dbReference type="HAMAP-Rule" id="MF_01209"/>
    </source>
</evidence>
<accession>Q9RWI4</accession>
<keyword id="KW-0028">Amino-acid biosynthesis</keyword>
<keyword id="KW-0055">Arginine biosynthesis</keyword>
<keyword id="KW-0067">ATP-binding</keyword>
<keyword id="KW-0315">Glutamine amidotransferase</keyword>
<keyword id="KW-0436">Ligase</keyword>
<keyword id="KW-0547">Nucleotide-binding</keyword>
<keyword id="KW-0665">Pyrimidine biosynthesis</keyword>
<keyword id="KW-1185">Reference proteome</keyword>
<protein>
    <recommendedName>
        <fullName evidence="1">Carbamoyl phosphate synthase small chain</fullName>
        <ecNumber evidence="1">6.3.5.5</ecNumber>
    </recommendedName>
    <alternativeName>
        <fullName evidence="1">Carbamoyl phosphate synthetase glutamine chain</fullName>
    </alternativeName>
</protein>
<name>CARA_DEIRA</name>
<dbReference type="EC" id="6.3.5.5" evidence="1"/>
<dbReference type="EMBL" id="AE000513">
    <property type="protein sequence ID" value="AAF10261.1"/>
    <property type="molecule type" value="Genomic_DNA"/>
</dbReference>
<dbReference type="PIR" id="A75489">
    <property type="entry name" value="A75489"/>
</dbReference>
<dbReference type="RefSeq" id="NP_294407.1">
    <property type="nucleotide sequence ID" value="NC_001263.1"/>
</dbReference>
<dbReference type="RefSeq" id="WP_010887329.1">
    <property type="nucleotide sequence ID" value="NC_001263.1"/>
</dbReference>
<dbReference type="SMR" id="Q9RWI4"/>
<dbReference type="FunCoup" id="Q9RWI4">
    <property type="interactions" value="458"/>
</dbReference>
<dbReference type="STRING" id="243230.DR_0684"/>
<dbReference type="PaxDb" id="243230-DR_0684"/>
<dbReference type="EnsemblBacteria" id="AAF10261">
    <property type="protein sequence ID" value="AAF10261"/>
    <property type="gene ID" value="DR_0684"/>
</dbReference>
<dbReference type="GeneID" id="69516929"/>
<dbReference type="KEGG" id="dra:DR_0684"/>
<dbReference type="PATRIC" id="fig|243230.17.peg.861"/>
<dbReference type="eggNOG" id="COG0505">
    <property type="taxonomic scope" value="Bacteria"/>
</dbReference>
<dbReference type="HOGENOM" id="CLU_035901_2_1_0"/>
<dbReference type="InParanoid" id="Q9RWI4"/>
<dbReference type="OrthoDB" id="9804328at2"/>
<dbReference type="UniPathway" id="UPA00068">
    <property type="reaction ID" value="UER00171"/>
</dbReference>
<dbReference type="UniPathway" id="UPA00070">
    <property type="reaction ID" value="UER00115"/>
</dbReference>
<dbReference type="Proteomes" id="UP000002524">
    <property type="component" value="Chromosome 1"/>
</dbReference>
<dbReference type="GO" id="GO:0005951">
    <property type="term" value="C:carbamoyl-phosphate synthase complex"/>
    <property type="evidence" value="ECO:0000318"/>
    <property type="project" value="GO_Central"/>
</dbReference>
<dbReference type="GO" id="GO:0005737">
    <property type="term" value="C:cytoplasm"/>
    <property type="evidence" value="ECO:0000318"/>
    <property type="project" value="GO_Central"/>
</dbReference>
<dbReference type="GO" id="GO:0005524">
    <property type="term" value="F:ATP binding"/>
    <property type="evidence" value="ECO:0007669"/>
    <property type="project" value="UniProtKB-UniRule"/>
</dbReference>
<dbReference type="GO" id="GO:0004088">
    <property type="term" value="F:carbamoyl-phosphate synthase (glutamine-hydrolyzing) activity"/>
    <property type="evidence" value="ECO:0007669"/>
    <property type="project" value="UniProtKB-UniRule"/>
</dbReference>
<dbReference type="GO" id="GO:0004359">
    <property type="term" value="F:glutaminase activity"/>
    <property type="evidence" value="ECO:0007669"/>
    <property type="project" value="RHEA"/>
</dbReference>
<dbReference type="GO" id="GO:0006207">
    <property type="term" value="P:'de novo' pyrimidine nucleobase biosynthetic process"/>
    <property type="evidence" value="ECO:0007669"/>
    <property type="project" value="InterPro"/>
</dbReference>
<dbReference type="GO" id="GO:0044205">
    <property type="term" value="P:'de novo' UMP biosynthetic process"/>
    <property type="evidence" value="ECO:0007669"/>
    <property type="project" value="UniProtKB-UniRule"/>
</dbReference>
<dbReference type="GO" id="GO:0006541">
    <property type="term" value="P:glutamine metabolic process"/>
    <property type="evidence" value="ECO:0007669"/>
    <property type="project" value="InterPro"/>
</dbReference>
<dbReference type="GO" id="GO:0006526">
    <property type="term" value="P:L-arginine biosynthetic process"/>
    <property type="evidence" value="ECO:0000318"/>
    <property type="project" value="GO_Central"/>
</dbReference>
<dbReference type="CDD" id="cd01744">
    <property type="entry name" value="GATase1_CPSase"/>
    <property type="match status" value="1"/>
</dbReference>
<dbReference type="FunFam" id="3.40.50.880:FF:000075">
    <property type="entry name" value="Carbamoyl-phosphate synthase small chain"/>
    <property type="match status" value="1"/>
</dbReference>
<dbReference type="FunFam" id="3.50.30.20:FF:000001">
    <property type="entry name" value="Carbamoyl-phosphate synthase small chain"/>
    <property type="match status" value="1"/>
</dbReference>
<dbReference type="Gene3D" id="3.40.50.880">
    <property type="match status" value="1"/>
</dbReference>
<dbReference type="Gene3D" id="3.50.30.20">
    <property type="entry name" value="Carbamoyl-phosphate synthase small subunit, N-terminal domain"/>
    <property type="match status" value="1"/>
</dbReference>
<dbReference type="HAMAP" id="MF_01209">
    <property type="entry name" value="CPSase_S_chain"/>
    <property type="match status" value="1"/>
</dbReference>
<dbReference type="InterPro" id="IPR050472">
    <property type="entry name" value="Anth_synth/Amidotransfase"/>
</dbReference>
<dbReference type="InterPro" id="IPR006274">
    <property type="entry name" value="CarbamoylP_synth_ssu"/>
</dbReference>
<dbReference type="InterPro" id="IPR002474">
    <property type="entry name" value="CarbamoylP_synth_ssu_N"/>
</dbReference>
<dbReference type="InterPro" id="IPR036480">
    <property type="entry name" value="CarbP_synth_ssu_N_sf"/>
</dbReference>
<dbReference type="InterPro" id="IPR029062">
    <property type="entry name" value="Class_I_gatase-like"/>
</dbReference>
<dbReference type="InterPro" id="IPR035686">
    <property type="entry name" value="CPSase_GATase1"/>
</dbReference>
<dbReference type="InterPro" id="IPR017926">
    <property type="entry name" value="GATASE"/>
</dbReference>
<dbReference type="NCBIfam" id="TIGR01368">
    <property type="entry name" value="CPSaseIIsmall"/>
    <property type="match status" value="1"/>
</dbReference>
<dbReference type="NCBIfam" id="NF009475">
    <property type="entry name" value="PRK12838.1"/>
    <property type="match status" value="1"/>
</dbReference>
<dbReference type="PANTHER" id="PTHR43418:SF7">
    <property type="entry name" value="CARBAMOYL-PHOSPHATE SYNTHASE SMALL CHAIN"/>
    <property type="match status" value="1"/>
</dbReference>
<dbReference type="PANTHER" id="PTHR43418">
    <property type="entry name" value="MULTIFUNCTIONAL TRYPTOPHAN BIOSYNTHESIS PROTEIN-RELATED"/>
    <property type="match status" value="1"/>
</dbReference>
<dbReference type="Pfam" id="PF00988">
    <property type="entry name" value="CPSase_sm_chain"/>
    <property type="match status" value="1"/>
</dbReference>
<dbReference type="Pfam" id="PF00117">
    <property type="entry name" value="GATase"/>
    <property type="match status" value="1"/>
</dbReference>
<dbReference type="PRINTS" id="PR00097">
    <property type="entry name" value="ANTSNTHASEII"/>
</dbReference>
<dbReference type="PRINTS" id="PR00099">
    <property type="entry name" value="CPSGATASE"/>
</dbReference>
<dbReference type="PRINTS" id="PR00096">
    <property type="entry name" value="GATASE"/>
</dbReference>
<dbReference type="SMART" id="SM01097">
    <property type="entry name" value="CPSase_sm_chain"/>
    <property type="match status" value="1"/>
</dbReference>
<dbReference type="SUPFAM" id="SSF52021">
    <property type="entry name" value="Carbamoyl phosphate synthetase, small subunit N-terminal domain"/>
    <property type="match status" value="1"/>
</dbReference>
<dbReference type="SUPFAM" id="SSF52317">
    <property type="entry name" value="Class I glutamine amidotransferase-like"/>
    <property type="match status" value="1"/>
</dbReference>
<dbReference type="PROSITE" id="PS51273">
    <property type="entry name" value="GATASE_TYPE_1"/>
    <property type="match status" value="1"/>
</dbReference>
<reference key="1">
    <citation type="journal article" date="1999" name="Science">
        <title>Genome sequence of the radioresistant bacterium Deinococcus radiodurans R1.</title>
        <authorList>
            <person name="White O."/>
            <person name="Eisen J.A."/>
            <person name="Heidelberg J.F."/>
            <person name="Hickey E.K."/>
            <person name="Peterson J.D."/>
            <person name="Dodson R.J."/>
            <person name="Haft D.H."/>
            <person name="Gwinn M.L."/>
            <person name="Nelson W.C."/>
            <person name="Richardson D.L."/>
            <person name="Moffat K.S."/>
            <person name="Qin H."/>
            <person name="Jiang L."/>
            <person name="Pamphile W."/>
            <person name="Crosby M."/>
            <person name="Shen M."/>
            <person name="Vamathevan J.J."/>
            <person name="Lam P."/>
            <person name="McDonald L.A."/>
            <person name="Utterback T.R."/>
            <person name="Zalewski C."/>
            <person name="Makarova K.S."/>
            <person name="Aravind L."/>
            <person name="Daly M.J."/>
            <person name="Minton K.W."/>
            <person name="Fleischmann R.D."/>
            <person name="Ketchum K.A."/>
            <person name="Nelson K.E."/>
            <person name="Salzberg S.L."/>
            <person name="Smith H.O."/>
            <person name="Venter J.C."/>
            <person name="Fraser C.M."/>
        </authorList>
    </citation>
    <scope>NUCLEOTIDE SEQUENCE [LARGE SCALE GENOMIC DNA]</scope>
    <source>
        <strain>ATCC 13939 / DSM 20539 / JCM 16871 / CCUG 27074 / LMG 4051 / NBRC 15346 / NCIMB 9279 / VKM B-1422 / R1</strain>
    </source>
</reference>
<feature type="chain" id="PRO_0000112272" description="Carbamoyl phosphate synthase small chain">
    <location>
        <begin position="1"/>
        <end position="394"/>
    </location>
</feature>
<feature type="domain" description="Glutamine amidotransferase type-1" evidence="1">
    <location>
        <begin position="192"/>
        <end position="379"/>
    </location>
</feature>
<feature type="region of interest" description="CPSase" evidence="1">
    <location>
        <begin position="1"/>
        <end position="188"/>
    </location>
</feature>
<feature type="active site" description="Nucleophile" evidence="1">
    <location>
        <position position="267"/>
    </location>
</feature>
<feature type="active site" evidence="1">
    <location>
        <position position="352"/>
    </location>
</feature>
<feature type="active site" evidence="1">
    <location>
        <position position="354"/>
    </location>
</feature>
<feature type="binding site" evidence="1">
    <location>
        <position position="49"/>
    </location>
    <ligand>
        <name>L-glutamine</name>
        <dbReference type="ChEBI" id="CHEBI:58359"/>
    </ligand>
</feature>
<feature type="binding site" evidence="1">
    <location>
        <position position="240"/>
    </location>
    <ligand>
        <name>L-glutamine</name>
        <dbReference type="ChEBI" id="CHEBI:58359"/>
    </ligand>
</feature>
<feature type="binding site" evidence="1">
    <location>
        <position position="242"/>
    </location>
    <ligand>
        <name>L-glutamine</name>
        <dbReference type="ChEBI" id="CHEBI:58359"/>
    </ligand>
</feature>
<feature type="binding site" evidence="1">
    <location>
        <position position="268"/>
    </location>
    <ligand>
        <name>L-glutamine</name>
        <dbReference type="ChEBI" id="CHEBI:58359"/>
    </ligand>
</feature>
<feature type="binding site" evidence="1">
    <location>
        <position position="271"/>
    </location>
    <ligand>
        <name>L-glutamine</name>
        <dbReference type="ChEBI" id="CHEBI:58359"/>
    </ligand>
</feature>
<feature type="binding site" evidence="1">
    <location>
        <position position="309"/>
    </location>
    <ligand>
        <name>L-glutamine</name>
        <dbReference type="ChEBI" id="CHEBI:58359"/>
    </ligand>
</feature>
<feature type="binding site" evidence="1">
    <location>
        <position position="311"/>
    </location>
    <ligand>
        <name>L-glutamine</name>
        <dbReference type="ChEBI" id="CHEBI:58359"/>
    </ligand>
</feature>
<feature type="binding site" evidence="1">
    <location>
        <position position="312"/>
    </location>
    <ligand>
        <name>L-glutamine</name>
        <dbReference type="ChEBI" id="CHEBI:58359"/>
    </ligand>
</feature>
<sequence>MIRKERAILALEDGTVYRGYAFGYRGETVGEVVFNTSMTGYQEIMTDPSYNGQIVTITYPHVGNYGVAIYDMESNKPYVRGFISREFSGEYSNYRAQQSLEAFMQQYGVVSIQGIDTRALVRRLRSGGVVKGVIAHRSFTHPEDPYGEFTPAEEQIYVQRARDHQDIDGFDMTKEVTTALPYAFPTLRQGKRVVLMDFGIKHTIIERLAEVGIEPIVVPAHTTPAQIMALQPHGLFLSNGPGDPAPLEYAHKTAWEMMGLLPTFGICLGHQILGLAAGGQTFKMKFGHRGGNQPVKNLLTGNVEITSQNHGYAVDLDSIPNGAFVATHVNLNDGTLEGMAHSRYPVFSVQYHPEASPGPHDSRYLFDRFIEEIDAFDGGNGTPIIKANPGRLGV</sequence>